<evidence type="ECO:0000255" key="1">
    <source>
        <dbReference type="HAMAP-Rule" id="MF_00199"/>
    </source>
</evidence>
<sequence>MATYAVGDLQGCLQPLKCLLERVSFNPAVDRLWLVGDLVNRGPESLETLRFLYSIRQSLVCVLGNHDLHLLAAWHNVERLKKSDTLREIIEAPDADPLFDWLRQQKLLHYDEARGIAMAHAGIPPQWTLGQALGYAAEVEEALRDDSRLKLYLDGMYGNEPNKWSKNLTGVERLRVITNYLTRMRFCTAEGKLDLKSKEGLGTAPKGYKPWFAHKGRRSRHVTIIFGHWAALEGRVDEPGIIALDTGCVWGGAMTLYNVDSGEYHRCDCADDGTLRQPAQPTTLNDHT</sequence>
<reference key="1">
    <citation type="submission" date="2008-01" db="EMBL/GenBank/DDBJ databases">
        <title>Complete sequence of Pseudomonas putida GB-1.</title>
        <authorList>
            <consortium name="US DOE Joint Genome Institute"/>
            <person name="Copeland A."/>
            <person name="Lucas S."/>
            <person name="Lapidus A."/>
            <person name="Barry K."/>
            <person name="Glavina del Rio T."/>
            <person name="Dalin E."/>
            <person name="Tice H."/>
            <person name="Pitluck S."/>
            <person name="Bruce D."/>
            <person name="Goodwin L."/>
            <person name="Chertkov O."/>
            <person name="Brettin T."/>
            <person name="Detter J.C."/>
            <person name="Han C."/>
            <person name="Kuske C.R."/>
            <person name="Schmutz J."/>
            <person name="Larimer F."/>
            <person name="Land M."/>
            <person name="Hauser L."/>
            <person name="Kyrpides N."/>
            <person name="Kim E."/>
            <person name="McCarthy J.K."/>
            <person name="Richardson P."/>
        </authorList>
    </citation>
    <scope>NUCLEOTIDE SEQUENCE [LARGE SCALE GENOMIC DNA]</scope>
    <source>
        <strain>GB-1</strain>
    </source>
</reference>
<dbReference type="EC" id="3.6.1.41" evidence="1"/>
<dbReference type="EMBL" id="CP000926">
    <property type="protein sequence ID" value="ABY96341.1"/>
    <property type="molecule type" value="Genomic_DNA"/>
</dbReference>
<dbReference type="RefSeq" id="WP_012270197.1">
    <property type="nucleotide sequence ID" value="NC_010322.1"/>
</dbReference>
<dbReference type="SMR" id="B0KJ91"/>
<dbReference type="KEGG" id="ppg:PputGB1_0430"/>
<dbReference type="eggNOG" id="COG0639">
    <property type="taxonomic scope" value="Bacteria"/>
</dbReference>
<dbReference type="HOGENOM" id="CLU_056184_2_0_6"/>
<dbReference type="Proteomes" id="UP000002157">
    <property type="component" value="Chromosome"/>
</dbReference>
<dbReference type="GO" id="GO:0008803">
    <property type="term" value="F:bis(5'-nucleosyl)-tetraphosphatase (symmetrical) activity"/>
    <property type="evidence" value="ECO:0007669"/>
    <property type="project" value="UniProtKB-UniRule"/>
</dbReference>
<dbReference type="CDD" id="cd07422">
    <property type="entry name" value="MPP_ApaH"/>
    <property type="match status" value="1"/>
</dbReference>
<dbReference type="Gene3D" id="3.60.21.10">
    <property type="match status" value="1"/>
</dbReference>
<dbReference type="HAMAP" id="MF_00199">
    <property type="entry name" value="ApaH"/>
    <property type="match status" value="1"/>
</dbReference>
<dbReference type="InterPro" id="IPR004617">
    <property type="entry name" value="ApaH"/>
</dbReference>
<dbReference type="InterPro" id="IPR004843">
    <property type="entry name" value="Calcineurin-like_PHP_ApaH"/>
</dbReference>
<dbReference type="InterPro" id="IPR029052">
    <property type="entry name" value="Metallo-depent_PP-like"/>
</dbReference>
<dbReference type="NCBIfam" id="TIGR00668">
    <property type="entry name" value="apaH"/>
    <property type="match status" value="1"/>
</dbReference>
<dbReference type="NCBIfam" id="NF001204">
    <property type="entry name" value="PRK00166.1"/>
    <property type="match status" value="1"/>
</dbReference>
<dbReference type="PANTHER" id="PTHR40942">
    <property type="match status" value="1"/>
</dbReference>
<dbReference type="PANTHER" id="PTHR40942:SF4">
    <property type="entry name" value="CYTOCHROME C5"/>
    <property type="match status" value="1"/>
</dbReference>
<dbReference type="Pfam" id="PF00149">
    <property type="entry name" value="Metallophos"/>
    <property type="match status" value="1"/>
</dbReference>
<dbReference type="PIRSF" id="PIRSF000903">
    <property type="entry name" value="B5n-ttraPtase_sm"/>
    <property type="match status" value="1"/>
</dbReference>
<dbReference type="SUPFAM" id="SSF56300">
    <property type="entry name" value="Metallo-dependent phosphatases"/>
    <property type="match status" value="1"/>
</dbReference>
<protein>
    <recommendedName>
        <fullName evidence="1">Bis(5'-nucleosyl)-tetraphosphatase, symmetrical</fullName>
        <ecNumber evidence="1">3.6.1.41</ecNumber>
    </recommendedName>
    <alternativeName>
        <fullName evidence="1">Ap4A hydrolase</fullName>
    </alternativeName>
    <alternativeName>
        <fullName evidence="1">Diadenosine 5',5'''-P1,P4-tetraphosphate pyrophosphohydrolase</fullName>
    </alternativeName>
    <alternativeName>
        <fullName evidence="1">Diadenosine tetraphosphatase</fullName>
    </alternativeName>
</protein>
<gene>
    <name evidence="1" type="primary">apaH</name>
    <name type="ordered locus">PputGB1_0430</name>
</gene>
<comment type="function">
    <text evidence="1">Hydrolyzes diadenosine 5',5'''-P1,P4-tetraphosphate to yield ADP.</text>
</comment>
<comment type="catalytic activity">
    <reaction evidence="1">
        <text>P(1),P(4)-bis(5'-adenosyl) tetraphosphate + H2O = 2 ADP + 2 H(+)</text>
        <dbReference type="Rhea" id="RHEA:24252"/>
        <dbReference type="ChEBI" id="CHEBI:15377"/>
        <dbReference type="ChEBI" id="CHEBI:15378"/>
        <dbReference type="ChEBI" id="CHEBI:58141"/>
        <dbReference type="ChEBI" id="CHEBI:456216"/>
        <dbReference type="EC" id="3.6.1.41"/>
    </reaction>
</comment>
<comment type="similarity">
    <text evidence="1">Belongs to the Ap4A hydrolase family.</text>
</comment>
<keyword id="KW-0378">Hydrolase</keyword>
<accession>B0KJ91</accession>
<proteinExistence type="inferred from homology"/>
<organism>
    <name type="scientific">Pseudomonas putida (strain GB-1)</name>
    <dbReference type="NCBI Taxonomy" id="76869"/>
    <lineage>
        <taxon>Bacteria</taxon>
        <taxon>Pseudomonadati</taxon>
        <taxon>Pseudomonadota</taxon>
        <taxon>Gammaproteobacteria</taxon>
        <taxon>Pseudomonadales</taxon>
        <taxon>Pseudomonadaceae</taxon>
        <taxon>Pseudomonas</taxon>
    </lineage>
</organism>
<name>APAH_PSEPG</name>
<feature type="chain" id="PRO_1000077717" description="Bis(5'-nucleosyl)-tetraphosphatase, symmetrical">
    <location>
        <begin position="1"/>
        <end position="288"/>
    </location>
</feature>